<sequence length="425" mass="46508">MTRPSVSTFKAPKGTYDLLPPDSAKFLAVREAIAAPLRNSGYGYIETPGFENVELFARGVGESTDIVTKEMYVFETKGGDRLALRPETTAPVLRAVLEANLHKAGNLPVKVWYSGSQYRYERPQKGRYRHFSQVGAEAIGAEDPALDAELIILADQSYRALGLQDFRILLNSLGDQECRPVYRAALQDFLRGLDLDEETLRRAEINPLRVLDDKRPDVQKQLTEAPLLRDYLCDACKAYHEEVRELITAAGVVFEDDPKLVRGLDYYTRTTFEFVHDGLGSQSAVGGGGRYDGLSEMIGGPSLPSVGWALGVDRTVLALEAEGIELDIPSATSVFAVPLGEEARRILFAKVTELRKNGVAADFSYGGKGLKAAMKAANRSGARYTLVLGERDLAEGVVQLKDMESGEQTAIGVNEIVAELESRLG</sequence>
<comment type="catalytic activity">
    <reaction evidence="1">
        <text>tRNA(His) + L-histidine + ATP = L-histidyl-tRNA(His) + AMP + diphosphate + H(+)</text>
        <dbReference type="Rhea" id="RHEA:17313"/>
        <dbReference type="Rhea" id="RHEA-COMP:9665"/>
        <dbReference type="Rhea" id="RHEA-COMP:9689"/>
        <dbReference type="ChEBI" id="CHEBI:15378"/>
        <dbReference type="ChEBI" id="CHEBI:30616"/>
        <dbReference type="ChEBI" id="CHEBI:33019"/>
        <dbReference type="ChEBI" id="CHEBI:57595"/>
        <dbReference type="ChEBI" id="CHEBI:78442"/>
        <dbReference type="ChEBI" id="CHEBI:78527"/>
        <dbReference type="ChEBI" id="CHEBI:456215"/>
        <dbReference type="EC" id="6.1.1.21"/>
    </reaction>
</comment>
<comment type="subunit">
    <text evidence="1">Homodimer.</text>
</comment>
<comment type="subcellular location">
    <subcellularLocation>
        <location evidence="1">Cytoplasm</location>
    </subcellularLocation>
</comment>
<comment type="similarity">
    <text evidence="1">Belongs to the class-II aminoacyl-tRNA synthetase family.</text>
</comment>
<proteinExistence type="inferred from homology"/>
<feature type="chain" id="PRO_0000136274" description="Histidine--tRNA ligase">
    <location>
        <begin position="1"/>
        <end position="425"/>
    </location>
</feature>
<name>SYH_STRCO</name>
<keyword id="KW-0030">Aminoacyl-tRNA synthetase</keyword>
<keyword id="KW-0067">ATP-binding</keyword>
<keyword id="KW-0963">Cytoplasm</keyword>
<keyword id="KW-0436">Ligase</keyword>
<keyword id="KW-0547">Nucleotide-binding</keyword>
<keyword id="KW-0648">Protein biosynthesis</keyword>
<keyword id="KW-1185">Reference proteome</keyword>
<protein>
    <recommendedName>
        <fullName evidence="1">Histidine--tRNA ligase</fullName>
        <ecNumber evidence="1">6.1.1.21</ecNumber>
    </recommendedName>
    <alternativeName>
        <fullName evidence="1">Histidyl-tRNA synthetase</fullName>
        <shortName evidence="1">HisRS</shortName>
    </alternativeName>
</protein>
<reference key="1">
    <citation type="journal article" date="2002" name="Nature">
        <title>Complete genome sequence of the model actinomycete Streptomyces coelicolor A3(2).</title>
        <authorList>
            <person name="Bentley S.D."/>
            <person name="Chater K.F."/>
            <person name="Cerdeno-Tarraga A.-M."/>
            <person name="Challis G.L."/>
            <person name="Thomson N.R."/>
            <person name="James K.D."/>
            <person name="Harris D.E."/>
            <person name="Quail M.A."/>
            <person name="Kieser H."/>
            <person name="Harper D."/>
            <person name="Bateman A."/>
            <person name="Brown S."/>
            <person name="Chandra G."/>
            <person name="Chen C.W."/>
            <person name="Collins M."/>
            <person name="Cronin A."/>
            <person name="Fraser A."/>
            <person name="Goble A."/>
            <person name="Hidalgo J."/>
            <person name="Hornsby T."/>
            <person name="Howarth S."/>
            <person name="Huang C.-H."/>
            <person name="Kieser T."/>
            <person name="Larke L."/>
            <person name="Murphy L.D."/>
            <person name="Oliver K."/>
            <person name="O'Neil S."/>
            <person name="Rabbinowitsch E."/>
            <person name="Rajandream M.A."/>
            <person name="Rutherford K.M."/>
            <person name="Rutter S."/>
            <person name="Seeger K."/>
            <person name="Saunders D."/>
            <person name="Sharp S."/>
            <person name="Squares R."/>
            <person name="Squares S."/>
            <person name="Taylor K."/>
            <person name="Warren T."/>
            <person name="Wietzorrek A."/>
            <person name="Woodward J.R."/>
            <person name="Barrell B.G."/>
            <person name="Parkhill J."/>
            <person name="Hopwood D.A."/>
        </authorList>
    </citation>
    <scope>NUCLEOTIDE SEQUENCE [LARGE SCALE GENOMIC DNA]</scope>
    <source>
        <strain>ATCC BAA-471 / A3(2) / M145</strain>
    </source>
</reference>
<gene>
    <name evidence="1" type="primary">hisS</name>
    <name type="ordered locus">SCO1508</name>
    <name type="ORF">SC9C5.32c</name>
</gene>
<organism>
    <name type="scientific">Streptomyces coelicolor (strain ATCC BAA-471 / A3(2) / M145)</name>
    <dbReference type="NCBI Taxonomy" id="100226"/>
    <lineage>
        <taxon>Bacteria</taxon>
        <taxon>Bacillati</taxon>
        <taxon>Actinomycetota</taxon>
        <taxon>Actinomycetes</taxon>
        <taxon>Kitasatosporales</taxon>
        <taxon>Streptomycetaceae</taxon>
        <taxon>Streptomyces</taxon>
        <taxon>Streptomyces albidoflavus group</taxon>
    </lineage>
</organism>
<accession>Q9KXP2</accession>
<evidence type="ECO:0000255" key="1">
    <source>
        <dbReference type="HAMAP-Rule" id="MF_00127"/>
    </source>
</evidence>
<dbReference type="EC" id="6.1.1.21" evidence="1"/>
<dbReference type="EMBL" id="AL939109">
    <property type="protein sequence ID" value="CAB93388.1"/>
    <property type="molecule type" value="Genomic_DNA"/>
</dbReference>
<dbReference type="RefSeq" id="NP_625788.1">
    <property type="nucleotide sequence ID" value="NC_003888.3"/>
</dbReference>
<dbReference type="SMR" id="Q9KXP2"/>
<dbReference type="FunCoup" id="Q9KXP2">
    <property type="interactions" value="438"/>
</dbReference>
<dbReference type="STRING" id="100226.gene:17759094"/>
<dbReference type="PaxDb" id="100226-SCO1508"/>
<dbReference type="KEGG" id="sco:SCO1508"/>
<dbReference type="PATRIC" id="fig|100226.15.peg.1517"/>
<dbReference type="eggNOG" id="COG0124">
    <property type="taxonomic scope" value="Bacteria"/>
</dbReference>
<dbReference type="HOGENOM" id="CLU_025113_1_1_11"/>
<dbReference type="InParanoid" id="Q9KXP2"/>
<dbReference type="OrthoDB" id="9800814at2"/>
<dbReference type="PhylomeDB" id="Q9KXP2"/>
<dbReference type="Proteomes" id="UP000001973">
    <property type="component" value="Chromosome"/>
</dbReference>
<dbReference type="GO" id="GO:0005737">
    <property type="term" value="C:cytoplasm"/>
    <property type="evidence" value="ECO:0007669"/>
    <property type="project" value="UniProtKB-SubCell"/>
</dbReference>
<dbReference type="GO" id="GO:0005524">
    <property type="term" value="F:ATP binding"/>
    <property type="evidence" value="ECO:0007669"/>
    <property type="project" value="UniProtKB-UniRule"/>
</dbReference>
<dbReference type="GO" id="GO:0004821">
    <property type="term" value="F:histidine-tRNA ligase activity"/>
    <property type="evidence" value="ECO:0000318"/>
    <property type="project" value="GO_Central"/>
</dbReference>
<dbReference type="GO" id="GO:0006427">
    <property type="term" value="P:histidyl-tRNA aminoacylation"/>
    <property type="evidence" value="ECO:0000318"/>
    <property type="project" value="GO_Central"/>
</dbReference>
<dbReference type="CDD" id="cd00773">
    <property type="entry name" value="HisRS-like_core"/>
    <property type="match status" value="1"/>
</dbReference>
<dbReference type="CDD" id="cd00859">
    <property type="entry name" value="HisRS_anticodon"/>
    <property type="match status" value="1"/>
</dbReference>
<dbReference type="FunFam" id="3.30.930.10:FF:000058">
    <property type="entry name" value="Histidine--tRNA ligase"/>
    <property type="match status" value="1"/>
</dbReference>
<dbReference type="FunFam" id="3.40.50.800:FF:000021">
    <property type="entry name" value="Histidine--tRNA ligase"/>
    <property type="match status" value="1"/>
</dbReference>
<dbReference type="Gene3D" id="3.40.50.800">
    <property type="entry name" value="Anticodon-binding domain"/>
    <property type="match status" value="1"/>
</dbReference>
<dbReference type="Gene3D" id="3.30.930.10">
    <property type="entry name" value="Bira Bifunctional Protein, Domain 2"/>
    <property type="match status" value="1"/>
</dbReference>
<dbReference type="HAMAP" id="MF_00127">
    <property type="entry name" value="His_tRNA_synth"/>
    <property type="match status" value="1"/>
</dbReference>
<dbReference type="InterPro" id="IPR006195">
    <property type="entry name" value="aa-tRNA-synth_II"/>
</dbReference>
<dbReference type="InterPro" id="IPR045864">
    <property type="entry name" value="aa-tRNA-synth_II/BPL/LPL"/>
</dbReference>
<dbReference type="InterPro" id="IPR004154">
    <property type="entry name" value="Anticodon-bd"/>
</dbReference>
<dbReference type="InterPro" id="IPR036621">
    <property type="entry name" value="Anticodon-bd_dom_sf"/>
</dbReference>
<dbReference type="InterPro" id="IPR015807">
    <property type="entry name" value="His-tRNA-ligase"/>
</dbReference>
<dbReference type="InterPro" id="IPR041715">
    <property type="entry name" value="HisRS-like_core"/>
</dbReference>
<dbReference type="InterPro" id="IPR004516">
    <property type="entry name" value="HisRS/HisZ"/>
</dbReference>
<dbReference type="InterPro" id="IPR033656">
    <property type="entry name" value="HisRS_anticodon"/>
</dbReference>
<dbReference type="NCBIfam" id="TIGR00442">
    <property type="entry name" value="hisS"/>
    <property type="match status" value="1"/>
</dbReference>
<dbReference type="PANTHER" id="PTHR43707:SF1">
    <property type="entry name" value="HISTIDINE--TRNA LIGASE, MITOCHONDRIAL-RELATED"/>
    <property type="match status" value="1"/>
</dbReference>
<dbReference type="PANTHER" id="PTHR43707">
    <property type="entry name" value="HISTIDYL-TRNA SYNTHETASE"/>
    <property type="match status" value="1"/>
</dbReference>
<dbReference type="Pfam" id="PF03129">
    <property type="entry name" value="HGTP_anticodon"/>
    <property type="match status" value="1"/>
</dbReference>
<dbReference type="Pfam" id="PF13393">
    <property type="entry name" value="tRNA-synt_His"/>
    <property type="match status" value="1"/>
</dbReference>
<dbReference type="PIRSF" id="PIRSF001549">
    <property type="entry name" value="His-tRNA_synth"/>
    <property type="match status" value="1"/>
</dbReference>
<dbReference type="SUPFAM" id="SSF52954">
    <property type="entry name" value="Class II aaRS ABD-related"/>
    <property type="match status" value="1"/>
</dbReference>
<dbReference type="SUPFAM" id="SSF55681">
    <property type="entry name" value="Class II aaRS and biotin synthetases"/>
    <property type="match status" value="1"/>
</dbReference>
<dbReference type="PROSITE" id="PS50862">
    <property type="entry name" value="AA_TRNA_LIGASE_II"/>
    <property type="match status" value="1"/>
</dbReference>